<sequence length="584" mass="65029">MLSLTMLLLERVGLIIILAYVLMNIPYFKNLMNRRRTWKARWQLCIIFSLFALMSNLTGIVIDHQHSLSGSVYFRLDDDVSLANTRVLTIGVAGLVGGPFVGLFVGVISGIFRVYMGGADAQVYLISSIFIGIIAGYFGLQAQRRKRYPSIAKSAMIGIVMEMIQMLSILTFSHDKAYAVDLISLIALPMIIVNSVGTAIFMSIIISTLKQEEQMKAVQTHDVLQLMNQTLPYFKEGLNRESAQQIAMIIKNLMKVSAVAITSKNEILSHVGAGSDHHIPTNEILTSLSKDVLKSGKLKEVHTKEEIGCSHPNCPLRAAIVIPLEMHGSIVGTLKMYFTNPNDLTFVERQLAEGLANIFSSQIELGEAETQSKLLKDAEIKSLQAQVSPHFFFNSINTISALVRINSEKARELLLELSYFFRANLQGSKQHTITLDKELSQVRAYLSLEQARYPGRFNININVEDKYRDVLVPPFLIQILVENAIKHAFTNRKQGNDIDVSVIKETATHVRIIVQDNGQGISKDKMHLLGETSVESESGTGSALENLNLRLKGLFGKSAALQFESTSSGTTFWCVLPYERQEEE</sequence>
<evidence type="ECO:0000250" key="1"/>
<evidence type="ECO:0000250" key="2">
    <source>
        <dbReference type="UniProtKB" id="Q53705"/>
    </source>
</evidence>
<evidence type="ECO:0000255" key="3"/>
<protein>
    <recommendedName>
        <fullName>Sensor histidine kinase/phosphatase LytS</fullName>
        <ecNumber evidence="2">2.7.13.3</ecNumber>
        <ecNumber evidence="2">3.1.3.-</ecNumber>
    </recommendedName>
    <alternativeName>
        <fullName>Autolysin sensor kinase</fullName>
    </alternativeName>
</protein>
<dbReference type="EC" id="2.7.13.3" evidence="2"/>
<dbReference type="EC" id="3.1.3.-" evidence="2"/>
<dbReference type="EMBL" id="BA000018">
    <property type="protein sequence ID" value="BAB41474.1"/>
    <property type="molecule type" value="Genomic_DNA"/>
</dbReference>
<dbReference type="PIR" id="G89789">
    <property type="entry name" value="G89789"/>
</dbReference>
<dbReference type="RefSeq" id="WP_000950281.1">
    <property type="nucleotide sequence ID" value="NC_002745.2"/>
</dbReference>
<dbReference type="SMR" id="P60613"/>
<dbReference type="EnsemblBacteria" id="BAB41474">
    <property type="protein sequence ID" value="BAB41474"/>
    <property type="gene ID" value="BAB41474"/>
</dbReference>
<dbReference type="KEGG" id="sau:SA0250"/>
<dbReference type="HOGENOM" id="CLU_020473_3_3_9"/>
<dbReference type="GO" id="GO:0005886">
    <property type="term" value="C:plasma membrane"/>
    <property type="evidence" value="ECO:0007669"/>
    <property type="project" value="UniProtKB-SubCell"/>
</dbReference>
<dbReference type="GO" id="GO:0005524">
    <property type="term" value="F:ATP binding"/>
    <property type="evidence" value="ECO:0007669"/>
    <property type="project" value="UniProtKB-KW"/>
</dbReference>
<dbReference type="GO" id="GO:0016787">
    <property type="term" value="F:hydrolase activity"/>
    <property type="evidence" value="ECO:0007669"/>
    <property type="project" value="UniProtKB-KW"/>
</dbReference>
<dbReference type="GO" id="GO:0000155">
    <property type="term" value="F:phosphorelay sensor kinase activity"/>
    <property type="evidence" value="ECO:0007669"/>
    <property type="project" value="InterPro"/>
</dbReference>
<dbReference type="GO" id="GO:0071555">
    <property type="term" value="P:cell wall organization"/>
    <property type="evidence" value="ECO:0007669"/>
    <property type="project" value="InterPro"/>
</dbReference>
<dbReference type="CDD" id="cd16957">
    <property type="entry name" value="HATPase_LytS-like"/>
    <property type="match status" value="1"/>
</dbReference>
<dbReference type="Gene3D" id="1.10.1760.20">
    <property type="match status" value="1"/>
</dbReference>
<dbReference type="Gene3D" id="3.30.450.40">
    <property type="match status" value="1"/>
</dbReference>
<dbReference type="Gene3D" id="3.30.565.10">
    <property type="entry name" value="Histidine kinase-like ATPase, C-terminal domain"/>
    <property type="match status" value="1"/>
</dbReference>
<dbReference type="InterPro" id="IPR050640">
    <property type="entry name" value="Bact_2-comp_sensor_kinase"/>
</dbReference>
<dbReference type="InterPro" id="IPR003018">
    <property type="entry name" value="GAF"/>
</dbReference>
<dbReference type="InterPro" id="IPR029016">
    <property type="entry name" value="GAF-like_dom_sf"/>
</dbReference>
<dbReference type="InterPro" id="IPR036890">
    <property type="entry name" value="HATPase_C_sf"/>
</dbReference>
<dbReference type="InterPro" id="IPR010559">
    <property type="entry name" value="Sig_transdc_His_kin_internal"/>
</dbReference>
<dbReference type="InterPro" id="IPR011620">
    <property type="entry name" value="Sig_transdc_His_kinase_LytS_TM"/>
</dbReference>
<dbReference type="PANTHER" id="PTHR34220">
    <property type="entry name" value="SENSOR HISTIDINE KINASE YPDA"/>
    <property type="match status" value="1"/>
</dbReference>
<dbReference type="PANTHER" id="PTHR34220:SF7">
    <property type="entry name" value="SENSOR HISTIDINE KINASE YPDA"/>
    <property type="match status" value="1"/>
</dbReference>
<dbReference type="Pfam" id="PF07694">
    <property type="entry name" value="5TM-5TMR_LYT"/>
    <property type="match status" value="1"/>
</dbReference>
<dbReference type="Pfam" id="PF02518">
    <property type="entry name" value="HATPase_c"/>
    <property type="match status" value="1"/>
</dbReference>
<dbReference type="Pfam" id="PF06580">
    <property type="entry name" value="His_kinase"/>
    <property type="match status" value="1"/>
</dbReference>
<dbReference type="SMART" id="SM00065">
    <property type="entry name" value="GAF"/>
    <property type="match status" value="1"/>
</dbReference>
<dbReference type="SMART" id="SM00387">
    <property type="entry name" value="HATPase_c"/>
    <property type="match status" value="1"/>
</dbReference>
<dbReference type="SUPFAM" id="SSF55874">
    <property type="entry name" value="ATPase domain of HSP90 chaperone/DNA topoisomerase II/histidine kinase"/>
    <property type="match status" value="1"/>
</dbReference>
<dbReference type="SUPFAM" id="SSF55781">
    <property type="entry name" value="GAF domain-like"/>
    <property type="match status" value="1"/>
</dbReference>
<comment type="function">
    <text evidence="2">Member of the two-component regulatory system LytR/LytS that regulates genes involved in autolysis, programmed cell death, biofilm formation and cell wall metabolism. Also participates in sensing and responding to host defense cationic antimicrobial peptides (HDPs). Functions as a sensor protein kinase which is autophosphorylated at a histidine residue and transfers its phosphate group to the conserved aspartic acid residue in the regulatory domain of LytR. In turn, LytR binds to the upstream promoter regions of target genes including lrgA and lrgB, to positively regulate their expression. Also possesses a phosphatase activity that dephosphorylates and thus inactivates LytR.</text>
</comment>
<comment type="catalytic activity">
    <reaction evidence="2">
        <text>ATP + protein L-histidine = ADP + protein N-phospho-L-histidine.</text>
        <dbReference type="EC" id="2.7.13.3"/>
    </reaction>
</comment>
<comment type="subcellular location">
    <subcellularLocation>
        <location evidence="1">Cell membrane</location>
        <topology evidence="1">Multi-pass membrane protein</topology>
    </subcellularLocation>
</comment>
<comment type="PTM">
    <text evidence="2">Autophosphorylated on His-390.</text>
</comment>
<feature type="chain" id="PRO_0000074794" description="Sensor histidine kinase/phosphatase LytS">
    <location>
        <begin position="1"/>
        <end position="584"/>
    </location>
</feature>
<feature type="transmembrane region" description="Helical" evidence="3">
    <location>
        <begin position="6"/>
        <end position="28"/>
    </location>
</feature>
<feature type="transmembrane region" description="Helical" evidence="3">
    <location>
        <begin position="40"/>
        <end position="62"/>
    </location>
</feature>
<feature type="transmembrane region" description="Helical" evidence="3">
    <location>
        <begin position="88"/>
        <end position="110"/>
    </location>
</feature>
<feature type="transmembrane region" description="Helical" evidence="3">
    <location>
        <begin position="123"/>
        <end position="140"/>
    </location>
</feature>
<feature type="transmembrane region" description="Helical" evidence="3">
    <location>
        <begin position="155"/>
        <end position="172"/>
    </location>
</feature>
<feature type="transmembrane region" description="Helical" evidence="3">
    <location>
        <begin position="184"/>
        <end position="206"/>
    </location>
</feature>
<feature type="domain" description="GAF">
    <location>
        <begin position="311"/>
        <end position="362"/>
    </location>
</feature>
<feature type="domain" description="Histidine kinase">
    <location>
        <begin position="363"/>
        <end position="580"/>
    </location>
</feature>
<feature type="modified residue" description="Phosphohistidine; by autocatalysis" evidence="1">
    <location>
        <position position="390"/>
    </location>
</feature>
<accession>P60613</accession>
<accession>Q99WW3</accession>
<gene>
    <name type="primary">lytS</name>
    <name type="ordered locus">SA0250</name>
</gene>
<proteinExistence type="inferred from homology"/>
<reference key="1">
    <citation type="journal article" date="2001" name="Lancet">
        <title>Whole genome sequencing of meticillin-resistant Staphylococcus aureus.</title>
        <authorList>
            <person name="Kuroda M."/>
            <person name="Ohta T."/>
            <person name="Uchiyama I."/>
            <person name="Baba T."/>
            <person name="Yuzawa H."/>
            <person name="Kobayashi I."/>
            <person name="Cui L."/>
            <person name="Oguchi A."/>
            <person name="Aoki K."/>
            <person name="Nagai Y."/>
            <person name="Lian J.-Q."/>
            <person name="Ito T."/>
            <person name="Kanamori M."/>
            <person name="Matsumaru H."/>
            <person name="Maruyama A."/>
            <person name="Murakami H."/>
            <person name="Hosoyama A."/>
            <person name="Mizutani-Ui Y."/>
            <person name="Takahashi N.K."/>
            <person name="Sawano T."/>
            <person name="Inoue R."/>
            <person name="Kaito C."/>
            <person name="Sekimizu K."/>
            <person name="Hirakawa H."/>
            <person name="Kuhara S."/>
            <person name="Goto S."/>
            <person name="Yabuzaki J."/>
            <person name="Kanehisa M."/>
            <person name="Yamashita A."/>
            <person name="Oshima K."/>
            <person name="Furuya K."/>
            <person name="Yoshino C."/>
            <person name="Shiba T."/>
            <person name="Hattori M."/>
            <person name="Ogasawara N."/>
            <person name="Hayashi H."/>
            <person name="Hiramatsu K."/>
        </authorList>
    </citation>
    <scope>NUCLEOTIDE SEQUENCE [LARGE SCALE GENOMIC DNA]</scope>
    <source>
        <strain>N315</strain>
    </source>
</reference>
<name>LYTS_STAAN</name>
<keyword id="KW-0067">ATP-binding</keyword>
<keyword id="KW-1003">Cell membrane</keyword>
<keyword id="KW-0378">Hydrolase</keyword>
<keyword id="KW-0418">Kinase</keyword>
<keyword id="KW-0472">Membrane</keyword>
<keyword id="KW-0547">Nucleotide-binding</keyword>
<keyword id="KW-0597">Phosphoprotein</keyword>
<keyword id="KW-0808">Transferase</keyword>
<keyword id="KW-0812">Transmembrane</keyword>
<keyword id="KW-1133">Transmembrane helix</keyword>
<keyword id="KW-0902">Two-component regulatory system</keyword>
<organism>
    <name type="scientific">Staphylococcus aureus (strain N315)</name>
    <dbReference type="NCBI Taxonomy" id="158879"/>
    <lineage>
        <taxon>Bacteria</taxon>
        <taxon>Bacillati</taxon>
        <taxon>Bacillota</taxon>
        <taxon>Bacilli</taxon>
        <taxon>Bacillales</taxon>
        <taxon>Staphylococcaceae</taxon>
        <taxon>Staphylococcus</taxon>
    </lineage>
</organism>